<reference key="1">
    <citation type="journal article" date="2005" name="Nucleic Acids Res.">
        <title>The genome sequence of Salmonella enterica serovar Choleraesuis, a highly invasive and resistant zoonotic pathogen.</title>
        <authorList>
            <person name="Chiu C.-H."/>
            <person name="Tang P."/>
            <person name="Chu C."/>
            <person name="Hu S."/>
            <person name="Bao Q."/>
            <person name="Yu J."/>
            <person name="Chou Y.-Y."/>
            <person name="Wang H.-S."/>
            <person name="Lee Y.-S."/>
        </authorList>
    </citation>
    <scope>NUCLEOTIDE SEQUENCE [LARGE SCALE GENOMIC DNA]</scope>
    <source>
        <strain>SC-B67</strain>
    </source>
</reference>
<dbReference type="EMBL" id="AE017220">
    <property type="protein sequence ID" value="AAX65743.1"/>
    <property type="molecule type" value="Genomic_DNA"/>
</dbReference>
<dbReference type="RefSeq" id="WP_001236777.1">
    <property type="nucleotide sequence ID" value="NC_006905.1"/>
</dbReference>
<dbReference type="SMR" id="Q57NG8"/>
<dbReference type="KEGG" id="sec:SCH_1837"/>
<dbReference type="HOGENOM" id="CLU_179882_0_0_6"/>
<dbReference type="Proteomes" id="UP000000538">
    <property type="component" value="Chromosome"/>
</dbReference>
<dbReference type="InterPro" id="IPR025611">
    <property type="entry name" value="YobH"/>
</dbReference>
<dbReference type="Pfam" id="PF13996">
    <property type="entry name" value="YobH"/>
    <property type="match status" value="1"/>
</dbReference>
<keyword id="KW-0732">Signal</keyword>
<evidence type="ECO:0000255" key="1"/>
<sequence>MRLIIRAIVLFALVWIGLLMSGYGILVGSKVNAAGLGLQCHYLTARGTSTAQYLHTNSGIIGFSDCPIFRKIATVVDNG</sequence>
<protein>
    <recommendedName>
        <fullName>Uncharacterized protein YobH</fullName>
    </recommendedName>
</protein>
<name>YOBH_SALCH</name>
<proteinExistence type="inferred from homology"/>
<feature type="signal peptide" evidence="1">
    <location>
        <begin position="1"/>
        <end position="33"/>
    </location>
</feature>
<feature type="chain" id="PRO_0000259708" description="Uncharacterized protein YobH">
    <location>
        <begin position="34"/>
        <end position="79"/>
    </location>
</feature>
<organism>
    <name type="scientific">Salmonella choleraesuis (strain SC-B67)</name>
    <dbReference type="NCBI Taxonomy" id="321314"/>
    <lineage>
        <taxon>Bacteria</taxon>
        <taxon>Pseudomonadati</taxon>
        <taxon>Pseudomonadota</taxon>
        <taxon>Gammaproteobacteria</taxon>
        <taxon>Enterobacterales</taxon>
        <taxon>Enterobacteriaceae</taxon>
        <taxon>Salmonella</taxon>
    </lineage>
</organism>
<gene>
    <name type="primary">yobH</name>
    <name type="ordered locus">SCH_1837</name>
</gene>
<accession>Q57NG8</accession>